<comment type="function">
    <text evidence="1">Component of the Rcs signaling system, which controls transcription of numerous genes. RcsB is the response regulator that binds to regulatory DNA regions. Can function both in an RcsA-dependent or RcsA-independent manner.</text>
</comment>
<comment type="subunit">
    <text evidence="1">Interacts with RcsD and RcsA.</text>
</comment>
<comment type="PTM">
    <text evidence="1">Phosphorylated and activated by RcsD.</text>
</comment>
<comment type="similarity">
    <text evidence="1">Belongs to the RcsB family.</text>
</comment>
<comment type="sequence caution" evidence="3">
    <conflict type="erroneous initiation">
        <sequence resource="EMBL-CDS" id="AAN81214"/>
    </conflict>
</comment>
<feature type="chain" id="PRO_0000081210" description="Transcriptional regulatory protein RcsB">
    <location>
        <begin position="1"/>
        <end position="216"/>
    </location>
</feature>
<feature type="domain" description="Response regulatory" evidence="2">
    <location>
        <begin position="5"/>
        <end position="124"/>
    </location>
</feature>
<feature type="domain" description="HTH luxR-type" evidence="1">
    <location>
        <begin position="144"/>
        <end position="209"/>
    </location>
</feature>
<feature type="DNA-binding region" description="H-T-H motif" evidence="1">
    <location>
        <begin position="168"/>
        <end position="187"/>
    </location>
</feature>
<feature type="modified residue" description="4-aspartylphosphate" evidence="1">
    <location>
        <position position="56"/>
    </location>
</feature>
<proteinExistence type="inferred from homology"/>
<keyword id="KW-0238">DNA-binding</keyword>
<keyword id="KW-0597">Phosphoprotein</keyword>
<keyword id="KW-1185">Reference proteome</keyword>
<keyword id="KW-0804">Transcription</keyword>
<keyword id="KW-0805">Transcription regulation</keyword>
<keyword id="KW-0902">Two-component regulatory system</keyword>
<name>RCSB_ECOL6</name>
<evidence type="ECO:0000255" key="1">
    <source>
        <dbReference type="HAMAP-Rule" id="MF_00981"/>
    </source>
</evidence>
<evidence type="ECO:0000255" key="2">
    <source>
        <dbReference type="PROSITE-ProRule" id="PRU00169"/>
    </source>
</evidence>
<evidence type="ECO:0000305" key="3"/>
<reference key="1">
    <citation type="journal article" date="2002" name="Proc. Natl. Acad. Sci. U.S.A.">
        <title>Extensive mosaic structure revealed by the complete genome sequence of uropathogenic Escherichia coli.</title>
        <authorList>
            <person name="Welch R.A."/>
            <person name="Burland V."/>
            <person name="Plunkett G. III"/>
            <person name="Redford P."/>
            <person name="Roesch P."/>
            <person name="Rasko D."/>
            <person name="Buckles E.L."/>
            <person name="Liou S.-R."/>
            <person name="Boutin A."/>
            <person name="Hackett J."/>
            <person name="Stroud D."/>
            <person name="Mayhew G.F."/>
            <person name="Rose D.J."/>
            <person name="Zhou S."/>
            <person name="Schwartz D.C."/>
            <person name="Perna N.T."/>
            <person name="Mobley H.L.T."/>
            <person name="Donnenberg M.S."/>
            <person name="Blattner F.R."/>
        </authorList>
    </citation>
    <scope>NUCLEOTIDE SEQUENCE [LARGE SCALE GENOMIC DNA]</scope>
    <source>
        <strain>CFT073 / ATCC 700928 / UPEC</strain>
    </source>
</reference>
<dbReference type="EMBL" id="AE014075">
    <property type="protein sequence ID" value="AAN81214.1"/>
    <property type="status" value="ALT_INIT"/>
    <property type="molecule type" value="Genomic_DNA"/>
</dbReference>
<dbReference type="RefSeq" id="WP_001061917.1">
    <property type="nucleotide sequence ID" value="NZ_CP051263.1"/>
</dbReference>
<dbReference type="SMR" id="P69408"/>
<dbReference type="STRING" id="199310.c2760"/>
<dbReference type="GeneID" id="93774960"/>
<dbReference type="KEGG" id="ecc:c2760"/>
<dbReference type="eggNOG" id="COG2197">
    <property type="taxonomic scope" value="Bacteria"/>
</dbReference>
<dbReference type="HOGENOM" id="CLU_000445_90_1_6"/>
<dbReference type="Proteomes" id="UP000001410">
    <property type="component" value="Chromosome"/>
</dbReference>
<dbReference type="GO" id="GO:0003677">
    <property type="term" value="F:DNA binding"/>
    <property type="evidence" value="ECO:0007669"/>
    <property type="project" value="UniProtKB-UniRule"/>
</dbReference>
<dbReference type="GO" id="GO:0000160">
    <property type="term" value="P:phosphorelay signal transduction system"/>
    <property type="evidence" value="ECO:0007669"/>
    <property type="project" value="UniProtKB-UniRule"/>
</dbReference>
<dbReference type="GO" id="GO:0006355">
    <property type="term" value="P:regulation of DNA-templated transcription"/>
    <property type="evidence" value="ECO:0007669"/>
    <property type="project" value="UniProtKB-UniRule"/>
</dbReference>
<dbReference type="CDD" id="cd06170">
    <property type="entry name" value="LuxR_C_like"/>
    <property type="match status" value="1"/>
</dbReference>
<dbReference type="CDD" id="cd17535">
    <property type="entry name" value="REC_NarL-like"/>
    <property type="match status" value="1"/>
</dbReference>
<dbReference type="FunFam" id="1.10.10.10:FF:000072">
    <property type="entry name" value="Transcriptional regulatory protein RcsB"/>
    <property type="match status" value="1"/>
</dbReference>
<dbReference type="FunFam" id="3.40.50.2300:FF:000023">
    <property type="entry name" value="Transcriptional regulatory protein RcsB"/>
    <property type="match status" value="1"/>
</dbReference>
<dbReference type="Gene3D" id="3.40.50.2300">
    <property type="match status" value="1"/>
</dbReference>
<dbReference type="Gene3D" id="1.10.10.10">
    <property type="entry name" value="Winged helix-like DNA-binding domain superfamily/Winged helix DNA-binding domain"/>
    <property type="match status" value="1"/>
</dbReference>
<dbReference type="HAMAP" id="MF_00981">
    <property type="entry name" value="RcsB"/>
    <property type="match status" value="1"/>
</dbReference>
<dbReference type="InterPro" id="IPR011006">
    <property type="entry name" value="CheY-like_superfamily"/>
</dbReference>
<dbReference type="InterPro" id="IPR030864">
    <property type="entry name" value="RcsB"/>
</dbReference>
<dbReference type="InterPro" id="IPR016032">
    <property type="entry name" value="Sig_transdc_resp-reg_C-effctor"/>
</dbReference>
<dbReference type="InterPro" id="IPR001789">
    <property type="entry name" value="Sig_transdc_resp-reg_receiver"/>
</dbReference>
<dbReference type="InterPro" id="IPR000792">
    <property type="entry name" value="Tscrpt_reg_LuxR_C"/>
</dbReference>
<dbReference type="InterPro" id="IPR039420">
    <property type="entry name" value="WalR-like"/>
</dbReference>
<dbReference type="InterPro" id="IPR036388">
    <property type="entry name" value="WH-like_DNA-bd_sf"/>
</dbReference>
<dbReference type="NCBIfam" id="NF008098">
    <property type="entry name" value="PRK10840.1"/>
    <property type="match status" value="1"/>
</dbReference>
<dbReference type="PANTHER" id="PTHR43214:SF17">
    <property type="entry name" value="TRANSCRIPTIONAL REGULATORY PROTEIN RCSB"/>
    <property type="match status" value="1"/>
</dbReference>
<dbReference type="PANTHER" id="PTHR43214">
    <property type="entry name" value="TWO-COMPONENT RESPONSE REGULATOR"/>
    <property type="match status" value="1"/>
</dbReference>
<dbReference type="Pfam" id="PF00196">
    <property type="entry name" value="GerE"/>
    <property type="match status" value="1"/>
</dbReference>
<dbReference type="Pfam" id="PF00072">
    <property type="entry name" value="Response_reg"/>
    <property type="match status" value="1"/>
</dbReference>
<dbReference type="PRINTS" id="PR00038">
    <property type="entry name" value="HTHLUXR"/>
</dbReference>
<dbReference type="SMART" id="SM00421">
    <property type="entry name" value="HTH_LUXR"/>
    <property type="match status" value="1"/>
</dbReference>
<dbReference type="SMART" id="SM00448">
    <property type="entry name" value="REC"/>
    <property type="match status" value="1"/>
</dbReference>
<dbReference type="SUPFAM" id="SSF46894">
    <property type="entry name" value="C-terminal effector domain of the bipartite response regulators"/>
    <property type="match status" value="1"/>
</dbReference>
<dbReference type="SUPFAM" id="SSF52172">
    <property type="entry name" value="CheY-like"/>
    <property type="match status" value="1"/>
</dbReference>
<dbReference type="PROSITE" id="PS00622">
    <property type="entry name" value="HTH_LUXR_1"/>
    <property type="match status" value="1"/>
</dbReference>
<dbReference type="PROSITE" id="PS50043">
    <property type="entry name" value="HTH_LUXR_2"/>
    <property type="match status" value="1"/>
</dbReference>
<dbReference type="PROSITE" id="PS50110">
    <property type="entry name" value="RESPONSE_REGULATORY"/>
    <property type="match status" value="1"/>
</dbReference>
<gene>
    <name evidence="1" type="primary">rcsB</name>
    <name type="ordered locus">c2760</name>
</gene>
<sequence>MNNMNVIIADDHPIVLFGIRKSLEQIEWVNVVGEFEDSTALINNLPKLDAHVLITDLSMPGDKYGDGITLIKYIKRHFPSLSIIVLTMNNNPAILSAVLDLDIEGIVLKQGAPTDLPKALAALQKGKKFTPESVSRLLEKISAGGYGDKRLSPKESEVLRLFAEGFLVTEIAKKLNRSIKTISSQKKSAMMKLGVENDIALLNYLSSVTLSPADKD</sequence>
<organism>
    <name type="scientific">Escherichia coli O6:H1 (strain CFT073 / ATCC 700928 / UPEC)</name>
    <dbReference type="NCBI Taxonomy" id="199310"/>
    <lineage>
        <taxon>Bacteria</taxon>
        <taxon>Pseudomonadati</taxon>
        <taxon>Pseudomonadota</taxon>
        <taxon>Gammaproteobacteria</taxon>
        <taxon>Enterobacterales</taxon>
        <taxon>Enterobacteriaceae</taxon>
        <taxon>Escherichia</taxon>
    </lineage>
</organism>
<protein>
    <recommendedName>
        <fullName evidence="1">Transcriptional regulatory protein RcsB</fullName>
    </recommendedName>
</protein>
<accession>P69408</accession>
<accession>P14374</accession>